<protein>
    <recommendedName>
        <fullName evidence="1">o-succinylbenzoate synthase</fullName>
        <shortName evidence="1">OSB synthase</shortName>
        <shortName evidence="1">OSBS</shortName>
        <ecNumber evidence="1">4.2.1.113</ecNumber>
    </recommendedName>
    <alternativeName>
        <fullName evidence="1">4-(2'-carboxyphenyl)-4-oxybutyric acid synthase</fullName>
    </alternativeName>
    <alternativeName>
        <fullName evidence="1">o-succinylbenzoic acid synthase</fullName>
    </alternativeName>
</protein>
<organism>
    <name type="scientific">Edwardsiella ictaluri (strain 93-146)</name>
    <dbReference type="NCBI Taxonomy" id="634503"/>
    <lineage>
        <taxon>Bacteria</taxon>
        <taxon>Pseudomonadati</taxon>
        <taxon>Pseudomonadota</taxon>
        <taxon>Gammaproteobacteria</taxon>
        <taxon>Enterobacterales</taxon>
        <taxon>Hafniaceae</taxon>
        <taxon>Edwardsiella</taxon>
    </lineage>
</organism>
<dbReference type="EC" id="4.2.1.113" evidence="1"/>
<dbReference type="EMBL" id="CP001600">
    <property type="protein sequence ID" value="ACR69815.1"/>
    <property type="molecule type" value="Genomic_DNA"/>
</dbReference>
<dbReference type="RefSeq" id="WP_015871923.1">
    <property type="nucleotide sequence ID" value="NZ_CP169062.1"/>
</dbReference>
<dbReference type="SMR" id="C5B7H9"/>
<dbReference type="STRING" id="67780.B6E78_05255"/>
<dbReference type="GeneID" id="69539547"/>
<dbReference type="KEGG" id="eic:NT01EI_2647"/>
<dbReference type="PATRIC" id="fig|634503.3.peg.2362"/>
<dbReference type="HOGENOM" id="CLU_030273_0_1_6"/>
<dbReference type="OrthoDB" id="3725747at2"/>
<dbReference type="UniPathway" id="UPA00079"/>
<dbReference type="UniPathway" id="UPA01057">
    <property type="reaction ID" value="UER00165"/>
</dbReference>
<dbReference type="Proteomes" id="UP000001485">
    <property type="component" value="Chromosome"/>
</dbReference>
<dbReference type="GO" id="GO:0000287">
    <property type="term" value="F:magnesium ion binding"/>
    <property type="evidence" value="ECO:0007669"/>
    <property type="project" value="UniProtKB-UniRule"/>
</dbReference>
<dbReference type="GO" id="GO:0043748">
    <property type="term" value="F:O-succinylbenzoate synthase activity"/>
    <property type="evidence" value="ECO:0007669"/>
    <property type="project" value="UniProtKB-EC"/>
</dbReference>
<dbReference type="GO" id="GO:0009234">
    <property type="term" value="P:menaquinone biosynthetic process"/>
    <property type="evidence" value="ECO:0007669"/>
    <property type="project" value="UniProtKB-UniRule"/>
</dbReference>
<dbReference type="CDD" id="cd03320">
    <property type="entry name" value="OSBS"/>
    <property type="match status" value="1"/>
</dbReference>
<dbReference type="FunFam" id="3.20.20.120:FF:000006">
    <property type="entry name" value="o-succinylbenzoate synthase"/>
    <property type="match status" value="1"/>
</dbReference>
<dbReference type="Gene3D" id="3.20.20.120">
    <property type="entry name" value="Enolase-like C-terminal domain"/>
    <property type="match status" value="1"/>
</dbReference>
<dbReference type="Gene3D" id="3.30.390.10">
    <property type="entry name" value="Enolase-like, N-terminal domain"/>
    <property type="match status" value="1"/>
</dbReference>
<dbReference type="HAMAP" id="MF_00470">
    <property type="entry name" value="MenC_1"/>
    <property type="match status" value="1"/>
</dbReference>
<dbReference type="InterPro" id="IPR036849">
    <property type="entry name" value="Enolase-like_C_sf"/>
</dbReference>
<dbReference type="InterPro" id="IPR029017">
    <property type="entry name" value="Enolase-like_N"/>
</dbReference>
<dbReference type="InterPro" id="IPR029065">
    <property type="entry name" value="Enolase_C-like"/>
</dbReference>
<dbReference type="InterPro" id="IPR013342">
    <property type="entry name" value="Mandelate_racemase_C"/>
</dbReference>
<dbReference type="InterPro" id="IPR010196">
    <property type="entry name" value="OSB_synthase_MenC1"/>
</dbReference>
<dbReference type="InterPro" id="IPR041338">
    <property type="entry name" value="OSBS_N"/>
</dbReference>
<dbReference type="NCBIfam" id="TIGR01927">
    <property type="entry name" value="menC_gam_Gplu"/>
    <property type="match status" value="1"/>
</dbReference>
<dbReference type="NCBIfam" id="NF003473">
    <property type="entry name" value="PRK05105.1"/>
    <property type="match status" value="1"/>
</dbReference>
<dbReference type="PANTHER" id="PTHR48073:SF2">
    <property type="entry name" value="O-SUCCINYLBENZOATE SYNTHASE"/>
    <property type="match status" value="1"/>
</dbReference>
<dbReference type="PANTHER" id="PTHR48073">
    <property type="entry name" value="O-SUCCINYLBENZOATE SYNTHASE-RELATED"/>
    <property type="match status" value="1"/>
</dbReference>
<dbReference type="Pfam" id="PF21508">
    <property type="entry name" value="MenC_N"/>
    <property type="match status" value="1"/>
</dbReference>
<dbReference type="Pfam" id="PF13378">
    <property type="entry name" value="MR_MLE_C"/>
    <property type="match status" value="1"/>
</dbReference>
<dbReference type="SFLD" id="SFLDS00001">
    <property type="entry name" value="Enolase"/>
    <property type="match status" value="1"/>
</dbReference>
<dbReference type="SFLD" id="SFLDF00009">
    <property type="entry name" value="o-succinylbenzoate_synthase"/>
    <property type="match status" value="1"/>
</dbReference>
<dbReference type="SMART" id="SM00922">
    <property type="entry name" value="MR_MLE"/>
    <property type="match status" value="1"/>
</dbReference>
<dbReference type="SUPFAM" id="SSF51604">
    <property type="entry name" value="Enolase C-terminal domain-like"/>
    <property type="match status" value="1"/>
</dbReference>
<dbReference type="SUPFAM" id="SSF54826">
    <property type="entry name" value="Enolase N-terminal domain-like"/>
    <property type="match status" value="1"/>
</dbReference>
<keyword id="KW-0456">Lyase</keyword>
<keyword id="KW-0460">Magnesium</keyword>
<keyword id="KW-0474">Menaquinone biosynthesis</keyword>
<keyword id="KW-0479">Metal-binding</keyword>
<feature type="chain" id="PRO_1000206346" description="o-succinylbenzoate synthase">
    <location>
        <begin position="1"/>
        <end position="323"/>
    </location>
</feature>
<feature type="active site" description="Proton donor" evidence="1">
    <location>
        <position position="134"/>
    </location>
</feature>
<feature type="active site" description="Proton acceptor" evidence="1">
    <location>
        <position position="236"/>
    </location>
</feature>
<feature type="binding site" evidence="1">
    <location>
        <position position="162"/>
    </location>
    <ligand>
        <name>Mg(2+)</name>
        <dbReference type="ChEBI" id="CHEBI:18420"/>
    </ligand>
</feature>
<feature type="binding site" evidence="1">
    <location>
        <position position="191"/>
    </location>
    <ligand>
        <name>Mg(2+)</name>
        <dbReference type="ChEBI" id="CHEBI:18420"/>
    </ligand>
</feature>
<feature type="binding site" evidence="1">
    <location>
        <position position="214"/>
    </location>
    <ligand>
        <name>Mg(2+)</name>
        <dbReference type="ChEBI" id="CHEBI:18420"/>
    </ligand>
</feature>
<comment type="function">
    <text evidence="1">Converts 2-succinyl-6-hydroxy-2,4-cyclohexadiene-1-carboxylate (SHCHC) to 2-succinylbenzoate (OSB).</text>
</comment>
<comment type="catalytic activity">
    <reaction evidence="1">
        <text>(1R,6R)-6-hydroxy-2-succinyl-cyclohexa-2,4-diene-1-carboxylate = 2-succinylbenzoate + H2O</text>
        <dbReference type="Rhea" id="RHEA:10196"/>
        <dbReference type="ChEBI" id="CHEBI:15377"/>
        <dbReference type="ChEBI" id="CHEBI:18325"/>
        <dbReference type="ChEBI" id="CHEBI:58689"/>
        <dbReference type="EC" id="4.2.1.113"/>
    </reaction>
</comment>
<comment type="cofactor">
    <cofactor evidence="1">
        <name>a divalent metal cation</name>
        <dbReference type="ChEBI" id="CHEBI:60240"/>
    </cofactor>
</comment>
<comment type="pathway">
    <text evidence="1">Quinol/quinone metabolism; 1,4-dihydroxy-2-naphthoate biosynthesis; 1,4-dihydroxy-2-naphthoate from chorismate: step 4/7.</text>
</comment>
<comment type="pathway">
    <text evidence="1">Quinol/quinone metabolism; menaquinone biosynthesis.</text>
</comment>
<comment type="similarity">
    <text evidence="1">Belongs to the mandelate racemase/muconate lactonizing enzyme family. MenC type 1 subfamily.</text>
</comment>
<name>MENC_EDWI9</name>
<reference key="1">
    <citation type="submission" date="2009-03" db="EMBL/GenBank/DDBJ databases">
        <title>Complete genome sequence of Edwardsiella ictaluri 93-146.</title>
        <authorList>
            <person name="Williams M.L."/>
            <person name="Gillaspy A.F."/>
            <person name="Dyer D.W."/>
            <person name="Thune R.L."/>
            <person name="Waldbieser G.C."/>
            <person name="Schuster S.C."/>
            <person name="Gipson J."/>
            <person name="Zaitshik J."/>
            <person name="Landry C."/>
            <person name="Lawrence M.L."/>
        </authorList>
    </citation>
    <scope>NUCLEOTIDE SEQUENCE [LARGE SCALE GENOMIC DNA]</scope>
    <source>
        <strain>93-146</strain>
    </source>
</reference>
<accession>C5B7H9</accession>
<sequence length="323" mass="35386">MRQATLYRYRLPVDAGVALRNQRLKSRDGLLVRLHEDGREGWGEIAPLPEFSHETLPEAQEAACRLLAQWQVGAAPAESPLPSVAFGLSCAQAELSGTLPQAANYRSATLCNGDPDALFQVLQSIPGEKVAKVKVGLYEAVRDGMIVNLLLEALPDLHLRLDANRSWTRAKADGFAKYVNPDWRDRILFLEEPCKTRDESRAFARDTGIAIAWDESVRDADFRVEAEPGVAAIIIKPTLTGSLQRCRQLVTQAHQAGLSAVISSSIESSLGLSQLARMAAWLTPGTPPGLDTLMLMQAQLLRAWPACTLPLWGEDTLDVVWQG</sequence>
<evidence type="ECO:0000255" key="1">
    <source>
        <dbReference type="HAMAP-Rule" id="MF_00470"/>
    </source>
</evidence>
<gene>
    <name evidence="1" type="primary">menC</name>
    <name type="ordered locus">NT01EI_2647</name>
</gene>
<proteinExistence type="inferred from homology"/>